<organism>
    <name type="scientific">Thermobifida fusca (strain YX)</name>
    <dbReference type="NCBI Taxonomy" id="269800"/>
    <lineage>
        <taxon>Bacteria</taxon>
        <taxon>Bacillati</taxon>
        <taxon>Actinomycetota</taxon>
        <taxon>Actinomycetes</taxon>
        <taxon>Streptosporangiales</taxon>
        <taxon>Nocardiopsidaceae</taxon>
        <taxon>Thermobifida</taxon>
    </lineage>
</organism>
<evidence type="ECO:0000255" key="1">
    <source>
        <dbReference type="HAMAP-Rule" id="MF_01341"/>
    </source>
</evidence>
<evidence type="ECO:0000256" key="2">
    <source>
        <dbReference type="SAM" id="MobiDB-lite"/>
    </source>
</evidence>
<evidence type="ECO:0000305" key="3"/>
<dbReference type="EMBL" id="CP000088">
    <property type="protein sequence ID" value="AAZ56660.1"/>
    <property type="molecule type" value="Genomic_DNA"/>
</dbReference>
<dbReference type="RefSeq" id="WP_011293050.1">
    <property type="nucleotide sequence ID" value="NC_007333.1"/>
</dbReference>
<dbReference type="SMR" id="Q47LL2"/>
<dbReference type="STRING" id="269800.Tfu_2627"/>
<dbReference type="KEGG" id="tfu:Tfu_2627"/>
<dbReference type="eggNOG" id="COG0200">
    <property type="taxonomic scope" value="Bacteria"/>
</dbReference>
<dbReference type="HOGENOM" id="CLU_055188_4_1_11"/>
<dbReference type="OrthoDB" id="9810293at2"/>
<dbReference type="GO" id="GO:0022625">
    <property type="term" value="C:cytosolic large ribosomal subunit"/>
    <property type="evidence" value="ECO:0007669"/>
    <property type="project" value="TreeGrafter"/>
</dbReference>
<dbReference type="GO" id="GO:0019843">
    <property type="term" value="F:rRNA binding"/>
    <property type="evidence" value="ECO:0007669"/>
    <property type="project" value="UniProtKB-UniRule"/>
</dbReference>
<dbReference type="GO" id="GO:0003735">
    <property type="term" value="F:structural constituent of ribosome"/>
    <property type="evidence" value="ECO:0007669"/>
    <property type="project" value="InterPro"/>
</dbReference>
<dbReference type="GO" id="GO:0006412">
    <property type="term" value="P:translation"/>
    <property type="evidence" value="ECO:0007669"/>
    <property type="project" value="UniProtKB-UniRule"/>
</dbReference>
<dbReference type="FunFam" id="3.100.10.10:FF:000005">
    <property type="entry name" value="50S ribosomal protein L15"/>
    <property type="match status" value="1"/>
</dbReference>
<dbReference type="Gene3D" id="3.100.10.10">
    <property type="match status" value="1"/>
</dbReference>
<dbReference type="HAMAP" id="MF_01341">
    <property type="entry name" value="Ribosomal_uL15"/>
    <property type="match status" value="1"/>
</dbReference>
<dbReference type="InterPro" id="IPR030878">
    <property type="entry name" value="Ribosomal_uL15"/>
</dbReference>
<dbReference type="InterPro" id="IPR021131">
    <property type="entry name" value="Ribosomal_uL15/eL18"/>
</dbReference>
<dbReference type="InterPro" id="IPR036227">
    <property type="entry name" value="Ribosomal_uL15/eL18_sf"/>
</dbReference>
<dbReference type="InterPro" id="IPR005749">
    <property type="entry name" value="Ribosomal_uL15_bac-type"/>
</dbReference>
<dbReference type="InterPro" id="IPR001196">
    <property type="entry name" value="Ribosomal_uL15_CS"/>
</dbReference>
<dbReference type="NCBIfam" id="TIGR01071">
    <property type="entry name" value="rplO_bact"/>
    <property type="match status" value="1"/>
</dbReference>
<dbReference type="PANTHER" id="PTHR12934">
    <property type="entry name" value="50S RIBOSOMAL PROTEIN L15"/>
    <property type="match status" value="1"/>
</dbReference>
<dbReference type="PANTHER" id="PTHR12934:SF11">
    <property type="entry name" value="LARGE RIBOSOMAL SUBUNIT PROTEIN UL15M"/>
    <property type="match status" value="1"/>
</dbReference>
<dbReference type="Pfam" id="PF00828">
    <property type="entry name" value="Ribosomal_L27A"/>
    <property type="match status" value="1"/>
</dbReference>
<dbReference type="SUPFAM" id="SSF52080">
    <property type="entry name" value="Ribosomal proteins L15p and L18e"/>
    <property type="match status" value="1"/>
</dbReference>
<dbReference type="PROSITE" id="PS00475">
    <property type="entry name" value="RIBOSOMAL_L15"/>
    <property type="match status" value="1"/>
</dbReference>
<protein>
    <recommendedName>
        <fullName evidence="1">Large ribosomal subunit protein uL15</fullName>
    </recommendedName>
    <alternativeName>
        <fullName evidence="3">50S ribosomal protein L15</fullName>
    </alternativeName>
</protein>
<reference key="1">
    <citation type="journal article" date="2007" name="J. Bacteriol.">
        <title>Genome sequence and analysis of the soil cellulolytic actinomycete Thermobifida fusca YX.</title>
        <authorList>
            <person name="Lykidis A."/>
            <person name="Mavromatis K."/>
            <person name="Ivanova N."/>
            <person name="Anderson I."/>
            <person name="Land M."/>
            <person name="DiBartolo G."/>
            <person name="Martinez M."/>
            <person name="Lapidus A."/>
            <person name="Lucas S."/>
            <person name="Copeland A."/>
            <person name="Richardson P."/>
            <person name="Wilson D.B."/>
            <person name="Kyrpides N."/>
        </authorList>
    </citation>
    <scope>NUCLEOTIDE SEQUENCE [LARGE SCALE GENOMIC DNA]</scope>
    <source>
        <strain>YX</strain>
    </source>
</reference>
<name>RL15_THEFY</name>
<keyword id="KW-0687">Ribonucleoprotein</keyword>
<keyword id="KW-0689">Ribosomal protein</keyword>
<keyword id="KW-0694">RNA-binding</keyword>
<keyword id="KW-0699">rRNA-binding</keyword>
<accession>Q47LL2</accession>
<comment type="function">
    <text evidence="1">Binds to the 23S rRNA.</text>
</comment>
<comment type="subunit">
    <text evidence="1">Part of the 50S ribosomal subunit.</text>
</comment>
<comment type="similarity">
    <text evidence="1">Belongs to the universal ribosomal protein uL15 family.</text>
</comment>
<proteinExistence type="inferred from homology"/>
<feature type="chain" id="PRO_0000104842" description="Large ribosomal subunit protein uL15">
    <location>
        <begin position="1"/>
        <end position="149"/>
    </location>
</feature>
<feature type="region of interest" description="Disordered" evidence="2">
    <location>
        <begin position="1"/>
        <end position="52"/>
    </location>
</feature>
<gene>
    <name evidence="1" type="primary">rplO</name>
    <name type="ordered locus">Tfu_2627</name>
</gene>
<sequence>MSELLKLHHLRPAPGSNKAKIRKGRGEASKGKTAGRGTKGTKARSTVPAGFEGGQMPLIRRIPKLKGFSNAKFKTVYQVVNLDKLSKLYPEGGEVTIEDLVAKGAVRKNQPVKVLGTGEISVPVRVSANAFSSSAKEKILAAGGSVTEI</sequence>